<name>LMLN_DROPS</name>
<protein>
    <recommendedName>
        <fullName evidence="4">Leishmanolysin-like peptidase</fullName>
        <ecNumber evidence="2">3.4.24.-</ecNumber>
    </recommendedName>
</protein>
<gene>
    <name type="ORF">GA17800</name>
</gene>
<feature type="chain" id="PRO_0000303081" description="Leishmanolysin-like peptidase">
    <location>
        <begin position="1"/>
        <end position="684"/>
    </location>
</feature>
<feature type="active site" evidence="3">
    <location>
        <position position="258"/>
    </location>
</feature>
<feature type="binding site" evidence="3">
    <location>
        <position position="257"/>
    </location>
    <ligand>
        <name>Zn(2+)</name>
        <dbReference type="ChEBI" id="CHEBI:29105"/>
        <note>catalytic</note>
    </ligand>
</feature>
<feature type="binding site" evidence="3">
    <location>
        <position position="261"/>
    </location>
    <ligand>
        <name>Zn(2+)</name>
        <dbReference type="ChEBI" id="CHEBI:29105"/>
        <note>catalytic</note>
    </ligand>
</feature>
<feature type="binding site" evidence="3">
    <location>
        <position position="364"/>
    </location>
    <ligand>
        <name>Zn(2+)</name>
        <dbReference type="ChEBI" id="CHEBI:29105"/>
        <note>catalytic</note>
    </ligand>
</feature>
<dbReference type="EC" id="3.4.24.-" evidence="2"/>
<dbReference type="EMBL" id="CM000070">
    <property type="protein sequence ID" value="EAL27347.1"/>
    <property type="molecule type" value="Genomic_DNA"/>
</dbReference>
<dbReference type="SMR" id="Q29AK2"/>
<dbReference type="FunCoup" id="Q29AK2">
    <property type="interactions" value="962"/>
</dbReference>
<dbReference type="STRING" id="46245.Q29AK2"/>
<dbReference type="MEROPS" id="M08.002"/>
<dbReference type="EnsemblMetazoa" id="FBtr0284031">
    <property type="protein sequence ID" value="FBpp0282469"/>
    <property type="gene ID" value="FBgn0077809"/>
</dbReference>
<dbReference type="EnsemblMetazoa" id="FBtr0379758">
    <property type="protein sequence ID" value="FBpp0340309"/>
    <property type="gene ID" value="FBgn0077809"/>
</dbReference>
<dbReference type="KEGG" id="dpo:4801047"/>
<dbReference type="CTD" id="49580"/>
<dbReference type="eggNOG" id="KOG2556">
    <property type="taxonomic scope" value="Eukaryota"/>
</dbReference>
<dbReference type="HOGENOM" id="CLU_023820_1_0_1"/>
<dbReference type="InParanoid" id="Q29AK2"/>
<dbReference type="OMA" id="MVRHHVH"/>
<dbReference type="PhylomeDB" id="Q29AK2"/>
<dbReference type="Proteomes" id="UP000001819">
    <property type="component" value="Chromosome 2"/>
</dbReference>
<dbReference type="Bgee" id="FBgn0077809">
    <property type="expression patterns" value="Expressed in insect adult head and 2 other cell types or tissues"/>
</dbReference>
<dbReference type="GO" id="GO:0005737">
    <property type="term" value="C:cytoplasm"/>
    <property type="evidence" value="ECO:0000250"/>
    <property type="project" value="UniProtKB"/>
</dbReference>
<dbReference type="GO" id="GO:0016020">
    <property type="term" value="C:membrane"/>
    <property type="evidence" value="ECO:0007669"/>
    <property type="project" value="InterPro"/>
</dbReference>
<dbReference type="GO" id="GO:0046872">
    <property type="term" value="F:metal ion binding"/>
    <property type="evidence" value="ECO:0007669"/>
    <property type="project" value="UniProtKB-KW"/>
</dbReference>
<dbReference type="GO" id="GO:0004222">
    <property type="term" value="F:metalloendopeptidase activity"/>
    <property type="evidence" value="ECO:0007669"/>
    <property type="project" value="InterPro"/>
</dbReference>
<dbReference type="GO" id="GO:0008233">
    <property type="term" value="F:peptidase activity"/>
    <property type="evidence" value="ECO:0000250"/>
    <property type="project" value="UniProtKB"/>
</dbReference>
<dbReference type="GO" id="GO:0007420">
    <property type="term" value="P:brain development"/>
    <property type="evidence" value="ECO:0000250"/>
    <property type="project" value="UniProtKB"/>
</dbReference>
<dbReference type="GO" id="GO:0007155">
    <property type="term" value="P:cell adhesion"/>
    <property type="evidence" value="ECO:0007669"/>
    <property type="project" value="InterPro"/>
</dbReference>
<dbReference type="GO" id="GO:0051301">
    <property type="term" value="P:cell division"/>
    <property type="evidence" value="ECO:0007669"/>
    <property type="project" value="UniProtKB-KW"/>
</dbReference>
<dbReference type="GO" id="GO:0051298">
    <property type="term" value="P:centrosome duplication"/>
    <property type="evidence" value="ECO:0000250"/>
    <property type="project" value="UniProtKB"/>
</dbReference>
<dbReference type="GO" id="GO:0006338">
    <property type="term" value="P:chromatin remodeling"/>
    <property type="evidence" value="ECO:0000250"/>
    <property type="project" value="UniProtKB"/>
</dbReference>
<dbReference type="GO" id="GO:0008354">
    <property type="term" value="P:germ cell migration"/>
    <property type="evidence" value="ECO:0000250"/>
    <property type="project" value="UniProtKB"/>
</dbReference>
<dbReference type="GO" id="GO:0008406">
    <property type="term" value="P:gonad development"/>
    <property type="evidence" value="ECO:0000250"/>
    <property type="project" value="UniProtKB"/>
</dbReference>
<dbReference type="GO" id="GO:0007444">
    <property type="term" value="P:imaginal disc development"/>
    <property type="evidence" value="ECO:0000250"/>
    <property type="project" value="UniProtKB"/>
</dbReference>
<dbReference type="GO" id="GO:0007100">
    <property type="term" value="P:mitotic centrosome separation"/>
    <property type="evidence" value="ECO:0000250"/>
    <property type="project" value="UniProtKB"/>
</dbReference>
<dbReference type="GO" id="GO:0007076">
    <property type="term" value="P:mitotic chromosome condensation"/>
    <property type="evidence" value="ECO:0000250"/>
    <property type="project" value="UniProtKB"/>
</dbReference>
<dbReference type="GO" id="GO:0007052">
    <property type="term" value="P:mitotic spindle organization"/>
    <property type="evidence" value="ECO:0000250"/>
    <property type="project" value="UniProtKB"/>
</dbReference>
<dbReference type="GO" id="GO:0045842">
    <property type="term" value="P:positive regulation of mitotic metaphase/anaphase transition"/>
    <property type="evidence" value="ECO:0000250"/>
    <property type="project" value="UniProtKB"/>
</dbReference>
<dbReference type="GO" id="GO:0006508">
    <property type="term" value="P:proteolysis"/>
    <property type="evidence" value="ECO:0007669"/>
    <property type="project" value="UniProtKB-KW"/>
</dbReference>
<dbReference type="FunFam" id="2.10.55.10:FF:000001">
    <property type="entry name" value="Leishmanolysin like peptidase"/>
    <property type="match status" value="1"/>
</dbReference>
<dbReference type="FunFam" id="3.10.170.20:FF:000004">
    <property type="entry name" value="Leishmanolysin-like peptidase"/>
    <property type="match status" value="1"/>
</dbReference>
<dbReference type="FunFam" id="3.90.132.10:FF:000001">
    <property type="entry name" value="leishmanolysin-like peptidase isoform X2"/>
    <property type="match status" value="1"/>
</dbReference>
<dbReference type="Gene3D" id="3.10.170.20">
    <property type="match status" value="1"/>
</dbReference>
<dbReference type="Gene3D" id="3.90.132.10">
    <property type="entry name" value="Leishmanolysin , domain 2"/>
    <property type="match status" value="1"/>
</dbReference>
<dbReference type="Gene3D" id="2.10.55.10">
    <property type="entry name" value="Leishmanolysin domain 3"/>
    <property type="match status" value="1"/>
</dbReference>
<dbReference type="Gene3D" id="2.30.34.10">
    <property type="entry name" value="Leishmanolysin domain 4"/>
    <property type="match status" value="1"/>
</dbReference>
<dbReference type="InterPro" id="IPR001577">
    <property type="entry name" value="Peptidase_M8"/>
</dbReference>
<dbReference type="PANTHER" id="PTHR10942">
    <property type="entry name" value="LEISHMANOLYSIN-LIKE PEPTIDASE"/>
    <property type="match status" value="1"/>
</dbReference>
<dbReference type="PANTHER" id="PTHR10942:SF0">
    <property type="entry name" value="LEISHMANOLYSIN-LIKE PEPTIDASE"/>
    <property type="match status" value="1"/>
</dbReference>
<dbReference type="Pfam" id="PF01457">
    <property type="entry name" value="Peptidase_M8"/>
    <property type="match status" value="1"/>
</dbReference>
<dbReference type="SUPFAM" id="SSF55486">
    <property type="entry name" value="Metalloproteases ('zincins'), catalytic domain"/>
    <property type="match status" value="1"/>
</dbReference>
<comment type="function">
    <text evidence="2">Essential for the coordination of mitotic progression, and also plays a role in cell migration.</text>
</comment>
<comment type="cofactor">
    <cofactor evidence="1">
        <name>Zn(2+)</name>
        <dbReference type="ChEBI" id="CHEBI:29105"/>
    </cofactor>
    <text evidence="1">Binds 1 zinc ion per subunit.</text>
</comment>
<comment type="subcellular location">
    <subcellularLocation>
        <location>Cytoplasm</location>
    </subcellularLocation>
    <text>Found in ring-like structures resembling invadopodia. In migrating cells it relocalizes from internal structures to the leading edge of cells.</text>
</comment>
<comment type="similarity">
    <text evidence="4">Belongs to the peptidase M8 family.</text>
</comment>
<reference key="1">
    <citation type="journal article" date="2005" name="Genome Res.">
        <title>Comparative genome sequencing of Drosophila pseudoobscura: chromosomal, gene, and cis-element evolution.</title>
        <authorList>
            <person name="Richards S."/>
            <person name="Liu Y."/>
            <person name="Bettencourt B.R."/>
            <person name="Hradecky P."/>
            <person name="Letovsky S."/>
            <person name="Nielsen R."/>
            <person name="Thornton K."/>
            <person name="Hubisz M.J."/>
            <person name="Chen R."/>
            <person name="Meisel R.P."/>
            <person name="Couronne O."/>
            <person name="Hua S."/>
            <person name="Smith M.A."/>
            <person name="Zhang P."/>
            <person name="Liu J."/>
            <person name="Bussemaker H.J."/>
            <person name="van Batenburg M.F."/>
            <person name="Howells S.L."/>
            <person name="Scherer S.E."/>
            <person name="Sodergren E."/>
            <person name="Matthews B.B."/>
            <person name="Crosby M.A."/>
            <person name="Schroeder A.J."/>
            <person name="Ortiz-Barrientos D."/>
            <person name="Rives C.M."/>
            <person name="Metzker M.L."/>
            <person name="Muzny D.M."/>
            <person name="Scott G."/>
            <person name="Steffen D."/>
            <person name="Wheeler D.A."/>
            <person name="Worley K.C."/>
            <person name="Havlak P."/>
            <person name="Durbin K.J."/>
            <person name="Egan A."/>
            <person name="Gill R."/>
            <person name="Hume J."/>
            <person name="Morgan M.B."/>
            <person name="Miner G."/>
            <person name="Hamilton C."/>
            <person name="Huang Y."/>
            <person name="Waldron L."/>
            <person name="Verduzco D."/>
            <person name="Clerc-Blankenburg K.P."/>
            <person name="Dubchak I."/>
            <person name="Noor M.A.F."/>
            <person name="Anderson W."/>
            <person name="White K.P."/>
            <person name="Clark A.G."/>
            <person name="Schaeffer S.W."/>
            <person name="Gelbart W.M."/>
            <person name="Weinstock G.M."/>
            <person name="Gibbs R.A."/>
        </authorList>
    </citation>
    <scope>NUCLEOTIDE SEQUENCE [LARGE SCALE GENOMIC DNA]</scope>
    <source>
        <strain>MV2-25 / Tucson 14011-0121.94</strain>
    </source>
</reference>
<sequence>MGLPPLQTQPGTFLVALGLCCWLLATANAHNCQHQHPKAHEVVHGVRIQLADSDDDDAAGSSDAAVHSVRRRSVTAEQPLRILLVYDDSVYRLEEEKFNLINDTVLPEAVQFWEQALMVRETKGIIRLNRKCDSTQVYVKNGHTHCIDQCKATTMCGEVQVPNEHLDVCRVCNATGQNCRIDSNTQPGDGIQNADFVFYVSARQTQRCFKGLTVAYAAHCQQEAALDRPIAGHANLCPESISTKPQELQTLISTVKHEILHALGFSVSLYAFFRDDEGRPRTPRKSETGKPFLNEKLQIHQWSNETIRKVVRENWSVRGGHVNKEVDMMVTPRVVAEARAHFDCDKLEGAELEDQGGEGTALTHWEKRILENEAMTGTHTQSPVFSRITLALMEDSGWYRANYSMATPLSWGKGLGCSFAMRSCKDWIQMNHARGRSIHPFCSKVKQDPLQTECTDDRNSVALCNLIRHDYELPKSYQNFDSLQNVKSGEEGFYGGSVSLADHCPYIQEFTWRSKNIIVRGSHCRFVENNPKPEKNFALESYGHGSKCFDHSEAMWEERSCHQTREWQHWGSGCYKYTCFDGRLHILVGNYTYKCSFPGQKLSIRIAANGWLHKGAIMCPPCHELCGSHFAAQGKQCRPGEEADPLNKYPRDNLACGAESRQQRSVAIISAALLLAAGLRLGHS</sequence>
<proteinExistence type="inferred from homology"/>
<organism>
    <name type="scientific">Drosophila pseudoobscura pseudoobscura</name>
    <name type="common">Fruit fly</name>
    <dbReference type="NCBI Taxonomy" id="46245"/>
    <lineage>
        <taxon>Eukaryota</taxon>
        <taxon>Metazoa</taxon>
        <taxon>Ecdysozoa</taxon>
        <taxon>Arthropoda</taxon>
        <taxon>Hexapoda</taxon>
        <taxon>Insecta</taxon>
        <taxon>Pterygota</taxon>
        <taxon>Neoptera</taxon>
        <taxon>Endopterygota</taxon>
        <taxon>Diptera</taxon>
        <taxon>Brachycera</taxon>
        <taxon>Muscomorpha</taxon>
        <taxon>Ephydroidea</taxon>
        <taxon>Drosophilidae</taxon>
        <taxon>Drosophila</taxon>
        <taxon>Sophophora</taxon>
    </lineage>
</organism>
<evidence type="ECO:0000250" key="1">
    <source>
        <dbReference type="UniProtKB" id="P08148"/>
    </source>
</evidence>
<evidence type="ECO:0000250" key="2">
    <source>
        <dbReference type="UniProtKB" id="Q9VH19"/>
    </source>
</evidence>
<evidence type="ECO:0000255" key="3">
    <source>
        <dbReference type="PROSITE-ProRule" id="PRU10095"/>
    </source>
</evidence>
<evidence type="ECO:0000305" key="4"/>
<accession>Q29AK2</accession>
<keyword id="KW-0131">Cell cycle</keyword>
<keyword id="KW-0132">Cell division</keyword>
<keyword id="KW-0963">Cytoplasm</keyword>
<keyword id="KW-0378">Hydrolase</keyword>
<keyword id="KW-0479">Metal-binding</keyword>
<keyword id="KW-0482">Metalloprotease</keyword>
<keyword id="KW-0498">Mitosis</keyword>
<keyword id="KW-0645">Protease</keyword>
<keyword id="KW-1185">Reference proteome</keyword>
<keyword id="KW-0862">Zinc</keyword>